<sequence length="664" mass="76118">MKRRNADCSKLRRPLKRNRITEGIYGSTFLYLKFLVVWALVLLADFVLEFRFEYLWPFWLFIRSVYDSFRYQGLAFSVFFVCVAFTSNIICLLFIPIQWLFFAASTYVWVQYVWHTERGVCLPTVSLWILFVYIEAAIRFKDLKNFHVDLCRPFAAHCIGYPVVTLGFGFKSYVSYKMRLRKQKEVQKENEFYMQLLQQALPPEQQMLQKQEKEAEEAAKGLPDMDSSILIHHNGGIPANKKLSTTLPEIEYREKGKEKDKDAKKHNLGINNNNILQPVDSKIQEIEYMENHINSKRLNNDLVGSTENLLKEDSCTASSKNYKNASGVVNSSPRSHSATNGSIPSSSSKNEKKQKCTSKSPSAHKDLMENCIPNNQLSKPDALVRLEQDIKKLKADLQASRQVEQELRSQISSLSSTERGIRSEMGQLRQENELLQNKLHNAVQMKQKDKQNISQLEKKLKAEQEARSFVEKQLMEEKKRKKLEEATAARAVAFAAASRGECTETLRNRIRELEAEGKKLTMDMKVKEDQIRELELKVQELRKYKENEKDTEVLMSALSAMQDKTQHLENSLSAETRIKLDLFSALGDAKRQLEIAQGQILQKDQEIKDLKQKIAEVMAVMPSITYSAAASPLSPVSPHYSSKFVETSPSGLDPNASVYQPLKK</sequence>
<comment type="function">
    <text evidence="3">Plays a role in the regulation of neuronal activity.</text>
</comment>
<comment type="subcellular location">
    <subcellularLocation>
        <location evidence="1">Rough endoplasmic reticulum membrane</location>
        <topology evidence="4">Multi-pass membrane protein</topology>
    </subcellularLocation>
    <subcellularLocation>
        <location evidence="1">Nucleus membrane</location>
        <topology evidence="4">Multi-pass membrane protein</topology>
    </subcellularLocation>
    <text evidence="2">Detected in the nucleus membrane of non-neuronal cells and in axonal outgrowths of neuronal cells.</text>
</comment>
<comment type="similarity">
    <text evidence="6">Belongs to the macoilin family.</text>
</comment>
<evidence type="ECO:0000250" key="1">
    <source>
        <dbReference type="UniProtKB" id="P91193"/>
    </source>
</evidence>
<evidence type="ECO:0000250" key="2">
    <source>
        <dbReference type="UniProtKB" id="Q7TQE6"/>
    </source>
</evidence>
<evidence type="ECO:0000250" key="3">
    <source>
        <dbReference type="UniProtKB" id="Q8N5G2"/>
    </source>
</evidence>
<evidence type="ECO:0000255" key="4"/>
<evidence type="ECO:0000256" key="5">
    <source>
        <dbReference type="SAM" id="MobiDB-lite"/>
    </source>
</evidence>
<evidence type="ECO:0000305" key="6"/>
<name>MACOI_BOVIN</name>
<dbReference type="EMBL" id="AY845018">
    <property type="protein sequence ID" value="AAX11916.1"/>
    <property type="molecule type" value="mRNA"/>
</dbReference>
<dbReference type="RefSeq" id="NP_001033736.1">
    <property type="nucleotide sequence ID" value="NM_001038647.1"/>
</dbReference>
<dbReference type="SMR" id="Q2TLZ3"/>
<dbReference type="FunCoup" id="Q2TLZ3">
    <property type="interactions" value="3685"/>
</dbReference>
<dbReference type="STRING" id="9913.ENSBTAP00000003890"/>
<dbReference type="GlyCosmos" id="Q2TLZ3">
    <property type="glycosylation" value="4 sites, No reported glycans"/>
</dbReference>
<dbReference type="GlyGen" id="Q2TLZ3">
    <property type="glycosylation" value="4 sites"/>
</dbReference>
<dbReference type="PaxDb" id="9913-ENSBTAP00000003890"/>
<dbReference type="Ensembl" id="ENSBTAT00000003890.6">
    <property type="protein sequence ID" value="ENSBTAP00000003890.5"/>
    <property type="gene ID" value="ENSBTAG00000002988.7"/>
</dbReference>
<dbReference type="GeneID" id="540726"/>
<dbReference type="KEGG" id="bta:540726"/>
<dbReference type="CTD" id="55219"/>
<dbReference type="VEuPathDB" id="HostDB:ENSBTAG00000002988"/>
<dbReference type="VGNC" id="VGNC:36098">
    <property type="gene designation" value="MACO1"/>
</dbReference>
<dbReference type="eggNOG" id="KOG1821">
    <property type="taxonomic scope" value="Eukaryota"/>
</dbReference>
<dbReference type="GeneTree" id="ENSGT00390000016613"/>
<dbReference type="HOGENOM" id="CLU_012823_1_0_1"/>
<dbReference type="InParanoid" id="Q2TLZ3"/>
<dbReference type="OMA" id="ENTHADT"/>
<dbReference type="OrthoDB" id="10071111at2759"/>
<dbReference type="TreeFam" id="TF324023"/>
<dbReference type="Proteomes" id="UP000009136">
    <property type="component" value="Chromosome 2"/>
</dbReference>
<dbReference type="Bgee" id="ENSBTAG00000002988">
    <property type="expression patterns" value="Expressed in spermatid and 102 other cell types or tissues"/>
</dbReference>
<dbReference type="GO" id="GO:0031965">
    <property type="term" value="C:nuclear membrane"/>
    <property type="evidence" value="ECO:0007669"/>
    <property type="project" value="UniProtKB-SubCell"/>
</dbReference>
<dbReference type="GO" id="GO:0030867">
    <property type="term" value="C:rough endoplasmic reticulum membrane"/>
    <property type="evidence" value="ECO:0000250"/>
    <property type="project" value="UniProtKB"/>
</dbReference>
<dbReference type="GO" id="GO:0023041">
    <property type="term" value="P:neuronal signal transduction"/>
    <property type="evidence" value="ECO:0000250"/>
    <property type="project" value="UniProtKB"/>
</dbReference>
<dbReference type="InterPro" id="IPR019130">
    <property type="entry name" value="Macoilin"/>
</dbReference>
<dbReference type="PANTHER" id="PTHR47464">
    <property type="entry name" value="MACOILIN"/>
    <property type="match status" value="1"/>
</dbReference>
<dbReference type="PANTHER" id="PTHR47464:SF2">
    <property type="entry name" value="MACOILIN"/>
    <property type="match status" value="1"/>
</dbReference>
<dbReference type="Pfam" id="PF09726">
    <property type="entry name" value="Macoilin"/>
    <property type="match status" value="1"/>
</dbReference>
<proteinExistence type="evidence at transcript level"/>
<organism>
    <name type="scientific">Bos taurus</name>
    <name type="common">Bovine</name>
    <dbReference type="NCBI Taxonomy" id="9913"/>
    <lineage>
        <taxon>Eukaryota</taxon>
        <taxon>Metazoa</taxon>
        <taxon>Chordata</taxon>
        <taxon>Craniata</taxon>
        <taxon>Vertebrata</taxon>
        <taxon>Euteleostomi</taxon>
        <taxon>Mammalia</taxon>
        <taxon>Eutheria</taxon>
        <taxon>Laurasiatheria</taxon>
        <taxon>Artiodactyla</taxon>
        <taxon>Ruminantia</taxon>
        <taxon>Pecora</taxon>
        <taxon>Bovidae</taxon>
        <taxon>Bovinae</taxon>
        <taxon>Bos</taxon>
    </lineage>
</organism>
<accession>Q2TLZ3</accession>
<gene>
    <name type="primary">MACO1</name>
    <name type="synonym">TMEM57</name>
</gene>
<reference key="1">
    <citation type="submission" date="2004-12" db="EMBL/GenBank/DDBJ databases">
        <title>Identification of macoilin as a novel membrane-associated coiled-coil tetraspanin protein.</title>
        <authorList>
            <person name="Huang C.-H."/>
            <person name="Chen Y."/>
        </authorList>
    </citation>
    <scope>NUCLEOTIDE SEQUENCE [MRNA]</scope>
</reference>
<feature type="chain" id="PRO_0000070264" description="Macoilin">
    <location>
        <begin position="1"/>
        <end position="664"/>
    </location>
</feature>
<feature type="transmembrane region" description="Helical" evidence="4">
    <location>
        <begin position="28"/>
        <end position="48"/>
    </location>
</feature>
<feature type="transmembrane region" description="Helical" evidence="4">
    <location>
        <begin position="75"/>
        <end position="95"/>
    </location>
</feature>
<feature type="transmembrane region" description="Helical" evidence="4">
    <location>
        <begin position="120"/>
        <end position="140"/>
    </location>
</feature>
<feature type="transmembrane region" description="Helical" evidence="4">
    <location>
        <begin position="154"/>
        <end position="174"/>
    </location>
</feature>
<feature type="region of interest" description="Disordered" evidence="5">
    <location>
        <begin position="253"/>
        <end position="274"/>
    </location>
</feature>
<feature type="region of interest" description="Disordered" evidence="5">
    <location>
        <begin position="320"/>
        <end position="367"/>
    </location>
</feature>
<feature type="region of interest" description="Disordered" evidence="5">
    <location>
        <begin position="631"/>
        <end position="664"/>
    </location>
</feature>
<feature type="compositionally biased region" description="Basic and acidic residues" evidence="5">
    <location>
        <begin position="253"/>
        <end position="265"/>
    </location>
</feature>
<feature type="compositionally biased region" description="Polar residues" evidence="5">
    <location>
        <begin position="320"/>
        <end position="348"/>
    </location>
</feature>
<feature type="modified residue" description="Phosphoserine" evidence="3">
    <location>
        <position position="305"/>
    </location>
</feature>
<feature type="modified residue" description="Phosphoserine" evidence="3">
    <location>
        <position position="332"/>
    </location>
</feature>
<feature type="modified residue" description="Phosphoserine" evidence="3">
    <location>
        <position position="631"/>
    </location>
</feature>
<feature type="modified residue" description="Phosphoserine" evidence="3">
    <location>
        <position position="634"/>
    </location>
</feature>
<feature type="glycosylation site" description="N-linked (GlcNAc...) asparagine" evidence="4">
    <location>
        <position position="324"/>
    </location>
</feature>
<feature type="glycosylation site" description="N-linked (GlcNAc...) asparagine" evidence="4">
    <location>
        <position position="340"/>
    </location>
</feature>
<feature type="glycosylation site" description="N-linked (GlcNAc...) asparagine" evidence="4">
    <location>
        <position position="452"/>
    </location>
</feature>
<feature type="glycosylation site" description="N-linked (GlcNAc...) asparagine" evidence="4">
    <location>
        <position position="655"/>
    </location>
</feature>
<keyword id="KW-0256">Endoplasmic reticulum</keyword>
<keyword id="KW-0325">Glycoprotein</keyword>
<keyword id="KW-0472">Membrane</keyword>
<keyword id="KW-0539">Nucleus</keyword>
<keyword id="KW-0597">Phosphoprotein</keyword>
<keyword id="KW-1185">Reference proteome</keyword>
<keyword id="KW-0812">Transmembrane</keyword>
<keyword id="KW-1133">Transmembrane helix</keyword>
<protein>
    <recommendedName>
        <fullName>Macoilin</fullName>
    </recommendedName>
    <alternativeName>
        <fullName>Transmembrane protein 57</fullName>
    </alternativeName>
</protein>